<evidence type="ECO:0000255" key="1"/>
<evidence type="ECO:0000269" key="2">
    <source>
    </source>
</evidence>
<evidence type="ECO:0000269" key="3">
    <source>
    </source>
</evidence>
<evidence type="ECO:0000305" key="4"/>
<sequence length="167" mass="19893">MRVPQHYKKPGWQRFFAGMMCGAVISWFFFLFTYGTFQEEQVSLIEKQKEHVKDLNNQISIYQEDLHKLNEDNKRKLLIQSVSVKLLNGDKYKISQPDKTKFEEHVKDDISEVITKDIESVYQTKDLLKRTIENKVYMINEKKYEATVRELIIYTRLTVELEISFAT</sequence>
<comment type="function">
    <text evidence="2 3">Involved in sporulation.</text>
</comment>
<comment type="subcellular location">
    <subcellularLocation>
        <location evidence="4">Cell membrane</location>
        <topology evidence="4">Single-pass membrane protein</topology>
    </subcellularLocation>
</comment>
<comment type="induction">
    <text evidence="2">Expression requires the sigma-E factor SigE.</text>
</comment>
<feature type="chain" id="PRO_0000360576" description="Sporulation membrane protein YtrI">
    <location>
        <begin position="1"/>
        <end position="167"/>
    </location>
</feature>
<feature type="transmembrane region" description="Helical" evidence="1">
    <location>
        <begin position="15"/>
        <end position="35"/>
    </location>
</feature>
<dbReference type="EMBL" id="AF008220">
    <property type="protein sequence ID" value="AAC00404.1"/>
    <property type="molecule type" value="Genomic_DNA"/>
</dbReference>
<dbReference type="EMBL" id="AL009126">
    <property type="protein sequence ID" value="CAB14884.3"/>
    <property type="molecule type" value="Genomic_DNA"/>
</dbReference>
<dbReference type="PIR" id="E70000">
    <property type="entry name" value="E70000"/>
</dbReference>
<dbReference type="RefSeq" id="NP_390802.3">
    <property type="nucleotide sequence ID" value="NC_000964.3"/>
</dbReference>
<dbReference type="RefSeq" id="WP_003229408.1">
    <property type="nucleotide sequence ID" value="NZ_OZ025638.1"/>
</dbReference>
<dbReference type="SMR" id="O34460"/>
<dbReference type="FunCoup" id="O34460">
    <property type="interactions" value="27"/>
</dbReference>
<dbReference type="STRING" id="224308.BSU29240"/>
<dbReference type="PaxDb" id="224308-BSU29240"/>
<dbReference type="EnsemblBacteria" id="CAB14884">
    <property type="protein sequence ID" value="CAB14884"/>
    <property type="gene ID" value="BSU_29240"/>
</dbReference>
<dbReference type="GeneID" id="86872558"/>
<dbReference type="GeneID" id="937371"/>
<dbReference type="KEGG" id="bsu:BSU29240"/>
<dbReference type="PATRIC" id="fig|224308.179.peg.3176"/>
<dbReference type="eggNOG" id="ENOG5031KY3">
    <property type="taxonomic scope" value="Bacteria"/>
</dbReference>
<dbReference type="InParanoid" id="O34460"/>
<dbReference type="OrthoDB" id="2691164at2"/>
<dbReference type="BioCyc" id="BSUB:BSU29240-MONOMER"/>
<dbReference type="Proteomes" id="UP000001570">
    <property type="component" value="Chromosome"/>
</dbReference>
<dbReference type="GO" id="GO:0005886">
    <property type="term" value="C:plasma membrane"/>
    <property type="evidence" value="ECO:0007669"/>
    <property type="project" value="UniProtKB-SubCell"/>
</dbReference>
<dbReference type="InterPro" id="IPR048198">
    <property type="entry name" value="YtrI"/>
</dbReference>
<dbReference type="NCBIfam" id="NF041479">
    <property type="entry name" value="spor_membprot_YtrI"/>
    <property type="match status" value="1"/>
</dbReference>
<reference key="1">
    <citation type="journal article" date="1997" name="Microbiology">
        <title>Sequencing and functional annotation of the Bacillus subtilis genes in the 200 kb rrnB-dnaB region.</title>
        <authorList>
            <person name="Lapidus A."/>
            <person name="Galleron N."/>
            <person name="Sorokin A."/>
            <person name="Ehrlich S.D."/>
        </authorList>
    </citation>
    <scope>NUCLEOTIDE SEQUENCE [GENOMIC DNA]</scope>
</reference>
<reference key="2">
    <citation type="journal article" date="1997" name="Nature">
        <title>The complete genome sequence of the Gram-positive bacterium Bacillus subtilis.</title>
        <authorList>
            <person name="Kunst F."/>
            <person name="Ogasawara N."/>
            <person name="Moszer I."/>
            <person name="Albertini A.M."/>
            <person name="Alloni G."/>
            <person name="Azevedo V."/>
            <person name="Bertero M.G."/>
            <person name="Bessieres P."/>
            <person name="Bolotin A."/>
            <person name="Borchert S."/>
            <person name="Borriss R."/>
            <person name="Boursier L."/>
            <person name="Brans A."/>
            <person name="Braun M."/>
            <person name="Brignell S.C."/>
            <person name="Bron S."/>
            <person name="Brouillet S."/>
            <person name="Bruschi C.V."/>
            <person name="Caldwell B."/>
            <person name="Capuano V."/>
            <person name="Carter N.M."/>
            <person name="Choi S.-K."/>
            <person name="Codani J.-J."/>
            <person name="Connerton I.F."/>
            <person name="Cummings N.J."/>
            <person name="Daniel R.A."/>
            <person name="Denizot F."/>
            <person name="Devine K.M."/>
            <person name="Duesterhoeft A."/>
            <person name="Ehrlich S.D."/>
            <person name="Emmerson P.T."/>
            <person name="Entian K.-D."/>
            <person name="Errington J."/>
            <person name="Fabret C."/>
            <person name="Ferrari E."/>
            <person name="Foulger D."/>
            <person name="Fritz C."/>
            <person name="Fujita M."/>
            <person name="Fujita Y."/>
            <person name="Fuma S."/>
            <person name="Galizzi A."/>
            <person name="Galleron N."/>
            <person name="Ghim S.-Y."/>
            <person name="Glaser P."/>
            <person name="Goffeau A."/>
            <person name="Golightly E.J."/>
            <person name="Grandi G."/>
            <person name="Guiseppi G."/>
            <person name="Guy B.J."/>
            <person name="Haga K."/>
            <person name="Haiech J."/>
            <person name="Harwood C.R."/>
            <person name="Henaut A."/>
            <person name="Hilbert H."/>
            <person name="Holsappel S."/>
            <person name="Hosono S."/>
            <person name="Hullo M.-F."/>
            <person name="Itaya M."/>
            <person name="Jones L.-M."/>
            <person name="Joris B."/>
            <person name="Karamata D."/>
            <person name="Kasahara Y."/>
            <person name="Klaerr-Blanchard M."/>
            <person name="Klein C."/>
            <person name="Kobayashi Y."/>
            <person name="Koetter P."/>
            <person name="Koningstein G."/>
            <person name="Krogh S."/>
            <person name="Kumano M."/>
            <person name="Kurita K."/>
            <person name="Lapidus A."/>
            <person name="Lardinois S."/>
            <person name="Lauber J."/>
            <person name="Lazarevic V."/>
            <person name="Lee S.-M."/>
            <person name="Levine A."/>
            <person name="Liu H."/>
            <person name="Masuda S."/>
            <person name="Mauel C."/>
            <person name="Medigue C."/>
            <person name="Medina N."/>
            <person name="Mellado R.P."/>
            <person name="Mizuno M."/>
            <person name="Moestl D."/>
            <person name="Nakai S."/>
            <person name="Noback M."/>
            <person name="Noone D."/>
            <person name="O'Reilly M."/>
            <person name="Ogawa K."/>
            <person name="Ogiwara A."/>
            <person name="Oudega B."/>
            <person name="Park S.-H."/>
            <person name="Parro V."/>
            <person name="Pohl T.M."/>
            <person name="Portetelle D."/>
            <person name="Porwollik S."/>
            <person name="Prescott A.M."/>
            <person name="Presecan E."/>
            <person name="Pujic P."/>
            <person name="Purnelle B."/>
            <person name="Rapoport G."/>
            <person name="Rey M."/>
            <person name="Reynolds S."/>
            <person name="Rieger M."/>
            <person name="Rivolta C."/>
            <person name="Rocha E."/>
            <person name="Roche B."/>
            <person name="Rose M."/>
            <person name="Sadaie Y."/>
            <person name="Sato T."/>
            <person name="Scanlan E."/>
            <person name="Schleich S."/>
            <person name="Schroeter R."/>
            <person name="Scoffone F."/>
            <person name="Sekiguchi J."/>
            <person name="Sekowska A."/>
            <person name="Seror S.J."/>
            <person name="Serror P."/>
            <person name="Shin B.-S."/>
            <person name="Soldo B."/>
            <person name="Sorokin A."/>
            <person name="Tacconi E."/>
            <person name="Takagi T."/>
            <person name="Takahashi H."/>
            <person name="Takemaru K."/>
            <person name="Takeuchi M."/>
            <person name="Tamakoshi A."/>
            <person name="Tanaka T."/>
            <person name="Terpstra P."/>
            <person name="Tognoni A."/>
            <person name="Tosato V."/>
            <person name="Uchiyama S."/>
            <person name="Vandenbol M."/>
            <person name="Vannier F."/>
            <person name="Vassarotti A."/>
            <person name="Viari A."/>
            <person name="Wambutt R."/>
            <person name="Wedler E."/>
            <person name="Wedler H."/>
            <person name="Weitzenegger T."/>
            <person name="Winters P."/>
            <person name="Wipat A."/>
            <person name="Yamamoto H."/>
            <person name="Yamane K."/>
            <person name="Yasumoto K."/>
            <person name="Yata K."/>
            <person name="Yoshida K."/>
            <person name="Yoshikawa H.-F."/>
            <person name="Zumstein E."/>
            <person name="Yoshikawa H."/>
            <person name="Danchin A."/>
        </authorList>
    </citation>
    <scope>NUCLEOTIDE SEQUENCE [LARGE SCALE GENOMIC DNA]</scope>
    <source>
        <strain>168</strain>
    </source>
</reference>
<reference key="3">
    <citation type="journal article" date="2003" name="J. Mol. Biol.">
        <title>The sigmaE regulon and the identification of additional sporulation genes in Bacillus subtilis.</title>
        <authorList>
            <person name="Eichenberger P."/>
            <person name="Jensen S.T."/>
            <person name="Conlon E.M."/>
            <person name="van Ooij C."/>
            <person name="Silvaggi J."/>
            <person name="Gonzalez-Pastor J.-E."/>
            <person name="Fujita M."/>
            <person name="Ben-Yehuda S."/>
            <person name="Stragier P."/>
            <person name="Liu J.S."/>
            <person name="Losick R."/>
        </authorList>
    </citation>
    <scope>FUNCTION</scope>
    <scope>INDUCTION</scope>
</reference>
<reference key="4">
    <citation type="journal article" date="2004" name="J. Bacteriol.">
        <title>Unmasking novel sporulation genes in Bacillus subtilis.</title>
        <authorList>
            <person name="Silvaggi J.M."/>
            <person name="Popham D.L."/>
            <person name="Driks A."/>
            <person name="Eichenberger P."/>
            <person name="Losick R."/>
        </authorList>
    </citation>
    <scope>FUNCTION</scope>
</reference>
<proteinExistence type="evidence at transcript level"/>
<protein>
    <recommendedName>
        <fullName>Sporulation membrane protein YtrI</fullName>
    </recommendedName>
</protein>
<gene>
    <name type="primary">ytrI</name>
    <name type="ordered locus">BSU29240</name>
</gene>
<keyword id="KW-1003">Cell membrane</keyword>
<keyword id="KW-0472">Membrane</keyword>
<keyword id="KW-1185">Reference proteome</keyword>
<keyword id="KW-0812">Transmembrane</keyword>
<keyword id="KW-1133">Transmembrane helix</keyword>
<accession>O34460</accession>
<accession>Q795V3</accession>
<organism>
    <name type="scientific">Bacillus subtilis (strain 168)</name>
    <dbReference type="NCBI Taxonomy" id="224308"/>
    <lineage>
        <taxon>Bacteria</taxon>
        <taxon>Bacillati</taxon>
        <taxon>Bacillota</taxon>
        <taxon>Bacilli</taxon>
        <taxon>Bacillales</taxon>
        <taxon>Bacillaceae</taxon>
        <taxon>Bacillus</taxon>
    </lineage>
</organism>
<name>YTRI_BACSU</name>